<name>MMM1_PICGU</name>
<keyword id="KW-0256">Endoplasmic reticulum</keyword>
<keyword id="KW-0445">Lipid transport</keyword>
<keyword id="KW-0446">Lipid-binding</keyword>
<keyword id="KW-0472">Membrane</keyword>
<keyword id="KW-1185">Reference proteome</keyword>
<keyword id="KW-0812">Transmembrane</keyword>
<keyword id="KW-1133">Transmembrane helix</keyword>
<keyword id="KW-0813">Transport</keyword>
<reference key="1">
    <citation type="journal article" date="2009" name="Nature">
        <title>Evolution of pathogenicity and sexual reproduction in eight Candida genomes.</title>
        <authorList>
            <person name="Butler G."/>
            <person name="Rasmussen M.D."/>
            <person name="Lin M.F."/>
            <person name="Santos M.A.S."/>
            <person name="Sakthikumar S."/>
            <person name="Munro C.A."/>
            <person name="Rheinbay E."/>
            <person name="Grabherr M."/>
            <person name="Forche A."/>
            <person name="Reedy J.L."/>
            <person name="Agrafioti I."/>
            <person name="Arnaud M.B."/>
            <person name="Bates S."/>
            <person name="Brown A.J.P."/>
            <person name="Brunke S."/>
            <person name="Costanzo M.C."/>
            <person name="Fitzpatrick D.A."/>
            <person name="de Groot P.W.J."/>
            <person name="Harris D."/>
            <person name="Hoyer L.L."/>
            <person name="Hube B."/>
            <person name="Klis F.M."/>
            <person name="Kodira C."/>
            <person name="Lennard N."/>
            <person name="Logue M.E."/>
            <person name="Martin R."/>
            <person name="Neiman A.M."/>
            <person name="Nikolaou E."/>
            <person name="Quail M.A."/>
            <person name="Quinn J."/>
            <person name="Santos M.C."/>
            <person name="Schmitzberger F.F."/>
            <person name="Sherlock G."/>
            <person name="Shah P."/>
            <person name="Silverstein K.A.T."/>
            <person name="Skrzypek M.S."/>
            <person name="Soll D."/>
            <person name="Staggs R."/>
            <person name="Stansfield I."/>
            <person name="Stumpf M.P.H."/>
            <person name="Sudbery P.E."/>
            <person name="Srikantha T."/>
            <person name="Zeng Q."/>
            <person name="Berman J."/>
            <person name="Berriman M."/>
            <person name="Heitman J."/>
            <person name="Gow N.A.R."/>
            <person name="Lorenz M.C."/>
            <person name="Birren B.W."/>
            <person name="Kellis M."/>
            <person name="Cuomo C.A."/>
        </authorList>
    </citation>
    <scope>NUCLEOTIDE SEQUENCE [LARGE SCALE GENOMIC DNA]</scope>
    <source>
        <strain>ATCC 6260 / CBS 566 / DSM 6381 / JCM 1539 / NBRC 10279 / NRRL Y-324</strain>
    </source>
</reference>
<proteinExistence type="inferred from homology"/>
<accession>A5DGW8</accession>
<protein>
    <recommendedName>
        <fullName evidence="1">Maintenance of mitochondrial morphology protein 1</fullName>
    </recommendedName>
</protein>
<dbReference type="EMBL" id="CH408157">
    <property type="protein sequence ID" value="EDK38421.2"/>
    <property type="molecule type" value="Genomic_DNA"/>
</dbReference>
<dbReference type="RefSeq" id="XP_001484790.1">
    <property type="nucleotide sequence ID" value="XM_001484740.1"/>
</dbReference>
<dbReference type="SMR" id="A5DGW8"/>
<dbReference type="FunCoup" id="A5DGW8">
    <property type="interactions" value="83"/>
</dbReference>
<dbReference type="STRING" id="294746.A5DGW8"/>
<dbReference type="GeneID" id="5127312"/>
<dbReference type="KEGG" id="pgu:PGUG_02519"/>
<dbReference type="VEuPathDB" id="FungiDB:PGUG_02519"/>
<dbReference type="eggNOG" id="ENOG502QUUW">
    <property type="taxonomic scope" value="Eukaryota"/>
</dbReference>
<dbReference type="HOGENOM" id="CLU_032730_2_0_1"/>
<dbReference type="InParanoid" id="A5DGW8"/>
<dbReference type="OMA" id="WSFTQGL"/>
<dbReference type="OrthoDB" id="5599157at2759"/>
<dbReference type="Proteomes" id="UP000001997">
    <property type="component" value="Unassembled WGS sequence"/>
</dbReference>
<dbReference type="GO" id="GO:0005789">
    <property type="term" value="C:endoplasmic reticulum membrane"/>
    <property type="evidence" value="ECO:0007669"/>
    <property type="project" value="UniProtKB-SubCell"/>
</dbReference>
<dbReference type="GO" id="GO:0032865">
    <property type="term" value="C:ERMES complex"/>
    <property type="evidence" value="ECO:0007669"/>
    <property type="project" value="UniProtKB-UniRule"/>
</dbReference>
<dbReference type="GO" id="GO:0008289">
    <property type="term" value="F:lipid binding"/>
    <property type="evidence" value="ECO:0007669"/>
    <property type="project" value="UniProtKB-KW"/>
</dbReference>
<dbReference type="GO" id="GO:0000002">
    <property type="term" value="P:mitochondrial genome maintenance"/>
    <property type="evidence" value="ECO:0007669"/>
    <property type="project" value="UniProtKB-UniRule"/>
</dbReference>
<dbReference type="GO" id="GO:1990456">
    <property type="term" value="P:mitochondrion-endoplasmic reticulum membrane tethering"/>
    <property type="evidence" value="ECO:0007669"/>
    <property type="project" value="TreeGrafter"/>
</dbReference>
<dbReference type="GO" id="GO:0015914">
    <property type="term" value="P:phospholipid transport"/>
    <property type="evidence" value="ECO:0007669"/>
    <property type="project" value="TreeGrafter"/>
</dbReference>
<dbReference type="GO" id="GO:0045040">
    <property type="term" value="P:protein insertion into mitochondrial outer membrane"/>
    <property type="evidence" value="ECO:0007669"/>
    <property type="project" value="UniProtKB-UniRule"/>
</dbReference>
<dbReference type="CDD" id="cd21671">
    <property type="entry name" value="SMP_Mmm1"/>
    <property type="match status" value="1"/>
</dbReference>
<dbReference type="HAMAP" id="MF_03103">
    <property type="entry name" value="Mmm1"/>
    <property type="match status" value="1"/>
</dbReference>
<dbReference type="InterPro" id="IPR027537">
    <property type="entry name" value="Mmm1"/>
</dbReference>
<dbReference type="InterPro" id="IPR019411">
    <property type="entry name" value="MMM1_dom"/>
</dbReference>
<dbReference type="InterPro" id="IPR031468">
    <property type="entry name" value="SMP_LBD"/>
</dbReference>
<dbReference type="PANTHER" id="PTHR13466:SF0">
    <property type="entry name" value="SMP-LTD DOMAIN-CONTAINING PROTEIN"/>
    <property type="match status" value="1"/>
</dbReference>
<dbReference type="PANTHER" id="PTHR13466">
    <property type="entry name" value="TEX2 PROTEIN-RELATED"/>
    <property type="match status" value="1"/>
</dbReference>
<dbReference type="Pfam" id="PF10296">
    <property type="entry name" value="MMM1"/>
    <property type="match status" value="1"/>
</dbReference>
<dbReference type="PROSITE" id="PS51847">
    <property type="entry name" value="SMP"/>
    <property type="match status" value="1"/>
</dbReference>
<comment type="function">
    <text evidence="1">Component of the ERMES/MDM complex, which serves as a molecular tether to connect the endoplasmic reticulum (ER) and mitochondria. Components of this complex are involved in the control of mitochondrial shape and protein biogenesis, and function in nonvesicular lipid trafficking between the ER and mitochondria. The MDM12-MMM1 subcomplex functions in the major beta-barrel assembly pathway that is responsible for biogenesis of all outer membrane beta-barrel proteins, and acts in a late step after the SAM complex. The MDM10-MDM12-MMM1 subcomplex further acts in the TOM40-specific pathway after the action of the MDM12-MMM1 complex. Essential for establishing and maintaining the structure of mitochondria and maintenance of mtDNA nucleoids.</text>
</comment>
<comment type="subunit">
    <text evidence="1">Homodimer. Component of the ER-mitochondria encounter structure (ERMES) or MDM complex, composed of MMM1, MDM10, MDM12 and MDM34. A MMM1 homodimer associates with one molecule of MDM12 on each side in a pairwise head-to-tail manner, and the SMP-LTD domains of MMM1 and MDM12 generate a continuous hydrophobic tunnel for phospholipid trafficking.</text>
</comment>
<comment type="subcellular location">
    <subcellularLocation>
        <location evidence="1">Endoplasmic reticulum membrane</location>
        <topology evidence="1">Single-pass type I membrane protein</topology>
    </subcellularLocation>
    <text evidence="1">The ERMES/MDM complex localizes to a few discrete foci (around 10 per single cell), that represent mitochondria-endoplasmic reticulum junctions. These foci are often found next to mtDNA nucleoids.</text>
</comment>
<comment type="domain">
    <text evidence="1">The SMP-LTD domain is a barrel-like domain that can bind various types of glycerophospholipids in its interior and mediate their transfer between two adjacent bilayers.</text>
</comment>
<comment type="similarity">
    <text evidence="1">Belongs to the MMM1 family.</text>
</comment>
<organism>
    <name type="scientific">Meyerozyma guilliermondii (strain ATCC 6260 / CBS 566 / DSM 6381 / JCM 1539 / NBRC 10279 / NRRL Y-324)</name>
    <name type="common">Yeast</name>
    <name type="synonym">Candida guilliermondii</name>
    <dbReference type="NCBI Taxonomy" id="294746"/>
    <lineage>
        <taxon>Eukaryota</taxon>
        <taxon>Fungi</taxon>
        <taxon>Dikarya</taxon>
        <taxon>Ascomycota</taxon>
        <taxon>Saccharomycotina</taxon>
        <taxon>Pichiomycetes</taxon>
        <taxon>Debaryomycetaceae</taxon>
        <taxon>Meyerozyma</taxon>
    </lineage>
</organism>
<feature type="chain" id="PRO_0000384246" description="Maintenance of mitochondrial morphology protein 1">
    <location>
        <begin position="1"/>
        <end position="405"/>
    </location>
</feature>
<feature type="topological domain" description="Lumenal" evidence="1">
    <location>
        <begin position="1"/>
        <end position="86"/>
    </location>
</feature>
<feature type="transmembrane region" description="Helical" evidence="1">
    <location>
        <begin position="87"/>
        <end position="107"/>
    </location>
</feature>
<feature type="topological domain" description="Cytoplasmic" evidence="1">
    <location>
        <begin position="108"/>
        <end position="405"/>
    </location>
</feature>
<feature type="domain" description="SMP-LTD" evidence="1">
    <location>
        <begin position="166"/>
        <end position="385"/>
    </location>
</feature>
<feature type="region of interest" description="Disordered" evidence="2">
    <location>
        <begin position="303"/>
        <end position="324"/>
    </location>
</feature>
<sequence>MQVLNFYVNPYLNLSFDLLPVANHFCRYSRHWKMSRDITRPDELASLIQLQDRLQTQQDELFRKQQELQFRETYAGTGSTKSFTQGLIIGQLSVIILLGIFIKFFVFADSSTTSSTSGNGISSKTDVSNILVKRKKNGDGDAGSEGRSDEVDTILEKTYYDVDNHAPESLDWFNVLIAQTISSFRYEALQSDNIYHSLKEFLSKSELPDYLGDIQLTEIDIGDDFPIFSNCRIRPSKDSHGRLEAKIDVDLSDTLTMGIQTKLILNQPRPLTAVLPISLSVSIVRFSGCLTVSLINTNEEEFSEPRVAMDSPQSTRDDNSEEPNGTALLFSFSPDYRLEFNVKSLIGSRAKLQDVPKISSLIEHRLRSWFVERCIEPRFQVVKLPSLWPRKKNTRQPVSTTESDH</sequence>
<evidence type="ECO:0000255" key="1">
    <source>
        <dbReference type="HAMAP-Rule" id="MF_03103"/>
    </source>
</evidence>
<evidence type="ECO:0000256" key="2">
    <source>
        <dbReference type="SAM" id="MobiDB-lite"/>
    </source>
</evidence>
<gene>
    <name evidence="1" type="primary">MMM1</name>
    <name type="ORF">PGUG_02519</name>
</gene>